<accession>P40844</accession>
<comment type="function">
    <text>Shows antibacterial activity against representative Gram-negative and Gram-positive bacterial species, and hemolytic activity.</text>
</comment>
<comment type="subcellular location">
    <subcellularLocation>
        <location>Secreted</location>
    </subcellularLocation>
</comment>
<comment type="tissue specificity">
    <text>Expressed by the skin glands.</text>
</comment>
<comment type="similarity">
    <text evidence="3">Belongs to the frog skin active peptide (FSAP) family. Brevinin subfamily.</text>
</comment>
<proteinExistence type="evidence at transcript level"/>
<name>ES1B_PELLE</name>
<organism>
    <name type="scientific">Pelophylax lessonae</name>
    <name type="common">Pool frog</name>
    <name type="synonym">Rana lessonae</name>
    <dbReference type="NCBI Taxonomy" id="45623"/>
    <lineage>
        <taxon>Eukaryota</taxon>
        <taxon>Metazoa</taxon>
        <taxon>Chordata</taxon>
        <taxon>Craniata</taxon>
        <taxon>Vertebrata</taxon>
        <taxon>Euteleostomi</taxon>
        <taxon>Amphibia</taxon>
        <taxon>Batrachia</taxon>
        <taxon>Anura</taxon>
        <taxon>Neobatrachia</taxon>
        <taxon>Ranoidea</taxon>
        <taxon>Ranidae</taxon>
        <taxon>Pelophylax</taxon>
    </lineage>
</organism>
<feature type="signal peptide" evidence="2">
    <location>
        <begin position="1"/>
        <end position="22"/>
    </location>
</feature>
<feature type="propeptide" id="PRO_0000003453">
    <location>
        <begin position="23"/>
        <end position="38"/>
    </location>
</feature>
<feature type="peptide" id="PRO_0000003454" description="Esculentin-1B">
    <location>
        <begin position="39"/>
        <end position="84"/>
    </location>
</feature>
<feature type="disulfide bond" evidence="1">
    <location>
        <begin position="78"/>
        <end position="84"/>
    </location>
</feature>
<protein>
    <recommendedName>
        <fullName>Esculentin-1B</fullName>
    </recommendedName>
</protein>
<keyword id="KW-0878">Amphibian defense peptide</keyword>
<keyword id="KW-0044">Antibiotic</keyword>
<keyword id="KW-0929">Antimicrobial</keyword>
<keyword id="KW-0165">Cleavage on pair of basic residues</keyword>
<keyword id="KW-0204">Cytolysis</keyword>
<keyword id="KW-1015">Disulfide bond</keyword>
<keyword id="KW-0354">Hemolysis</keyword>
<keyword id="KW-0964">Secreted</keyword>
<keyword id="KW-0732">Signal</keyword>
<sequence length="84" mass="9133">MFTLKKPLLLIVLLGMISLSLCEQERNADEEEGSEIKRGIFSKLAGKKLKNLLISGLKNVGKEVGMDVVRTGIDIAGCKIKGEC</sequence>
<evidence type="ECO:0000250" key="1"/>
<evidence type="ECO:0000255" key="2"/>
<evidence type="ECO:0000305" key="3"/>
<reference key="1">
    <citation type="journal article" date="1994" name="J. Biol. Chem.">
        <title>Antimicrobial peptides from skin secretions of Rana esculenta. Molecular cloning of cDNAs encoding esculentin and brevinins and isolation of new active peptides.</title>
        <authorList>
            <person name="Simmaco M."/>
            <person name="Mignogna G."/>
            <person name="Barra D."/>
            <person name="Bossa F."/>
        </authorList>
    </citation>
    <scope>NUCLEOTIDE SEQUENCE [MRNA]</scope>
    <source>
        <tissue>Skin</tissue>
    </source>
</reference>
<dbReference type="EMBL" id="X77833">
    <property type="protein sequence ID" value="CAA54844.1"/>
    <property type="molecule type" value="mRNA"/>
</dbReference>
<dbReference type="PIR" id="A53578">
    <property type="entry name" value="A53578"/>
</dbReference>
<dbReference type="TCDB" id="1.C.52.1.4">
    <property type="family name" value="the dermaseptin (dermaseptin) family"/>
</dbReference>
<dbReference type="GO" id="GO:0005576">
    <property type="term" value="C:extracellular region"/>
    <property type="evidence" value="ECO:0007669"/>
    <property type="project" value="UniProtKB-SubCell"/>
</dbReference>
<dbReference type="GO" id="GO:0042742">
    <property type="term" value="P:defense response to bacterium"/>
    <property type="evidence" value="ECO:0007669"/>
    <property type="project" value="UniProtKB-KW"/>
</dbReference>
<dbReference type="GO" id="GO:0031640">
    <property type="term" value="P:killing of cells of another organism"/>
    <property type="evidence" value="ECO:0007669"/>
    <property type="project" value="UniProtKB-KW"/>
</dbReference>
<dbReference type="InterPro" id="IPR012521">
    <property type="entry name" value="Antimicrobial_frog_2"/>
</dbReference>
<dbReference type="InterPro" id="IPR004275">
    <property type="entry name" value="Frog_antimicrobial_propeptide"/>
</dbReference>
<dbReference type="Pfam" id="PF08023">
    <property type="entry name" value="Antimicrobial_2"/>
    <property type="match status" value="1"/>
</dbReference>
<dbReference type="Pfam" id="PF03032">
    <property type="entry name" value="FSAP_sig_propep"/>
    <property type="match status" value="1"/>
</dbReference>